<evidence type="ECO:0000255" key="1">
    <source>
        <dbReference type="HAMAP-Rule" id="MF_03104"/>
    </source>
</evidence>
<evidence type="ECO:0000256" key="2">
    <source>
        <dbReference type="SAM" id="MobiDB-lite"/>
    </source>
</evidence>
<evidence type="ECO:0000305" key="3"/>
<dbReference type="EMBL" id="CR382138">
    <property type="protein sequence ID" value="CAR66394.1"/>
    <property type="status" value="ALT_INIT"/>
    <property type="molecule type" value="Genomic_DNA"/>
</dbReference>
<dbReference type="RefSeq" id="XP_002770876.1">
    <property type="nucleotide sequence ID" value="XM_002770830.1"/>
</dbReference>
<dbReference type="SMR" id="B5RUL6"/>
<dbReference type="FunCoup" id="B5RUL6">
    <property type="interactions" value="60"/>
</dbReference>
<dbReference type="STRING" id="284592.B5RUL6"/>
<dbReference type="GeneID" id="8999040"/>
<dbReference type="KEGG" id="dha:DEHA2F22022g"/>
<dbReference type="eggNOG" id="ENOG502S3PB">
    <property type="taxonomic scope" value="Eukaryota"/>
</dbReference>
<dbReference type="HOGENOM" id="CLU_026794_2_0_1"/>
<dbReference type="InParanoid" id="B5RUL6"/>
<dbReference type="OrthoDB" id="3356905at2759"/>
<dbReference type="Proteomes" id="UP000000599">
    <property type="component" value="Chromosome F"/>
</dbReference>
<dbReference type="GO" id="GO:0005789">
    <property type="term" value="C:endoplasmic reticulum membrane"/>
    <property type="evidence" value="ECO:0007669"/>
    <property type="project" value="UniProtKB-SubCell"/>
</dbReference>
<dbReference type="GO" id="GO:0032865">
    <property type="term" value="C:ERMES complex"/>
    <property type="evidence" value="ECO:0007669"/>
    <property type="project" value="UniProtKB-UniRule"/>
</dbReference>
<dbReference type="GO" id="GO:0008289">
    <property type="term" value="F:lipid binding"/>
    <property type="evidence" value="ECO:0007669"/>
    <property type="project" value="UniProtKB-KW"/>
</dbReference>
<dbReference type="GO" id="GO:0000002">
    <property type="term" value="P:mitochondrial genome maintenance"/>
    <property type="evidence" value="ECO:0007669"/>
    <property type="project" value="UniProtKB-UniRule"/>
</dbReference>
<dbReference type="GO" id="GO:1990456">
    <property type="term" value="P:mitochondrion-endoplasmic reticulum membrane tethering"/>
    <property type="evidence" value="ECO:0007669"/>
    <property type="project" value="TreeGrafter"/>
</dbReference>
<dbReference type="GO" id="GO:0015914">
    <property type="term" value="P:phospholipid transport"/>
    <property type="evidence" value="ECO:0007669"/>
    <property type="project" value="TreeGrafter"/>
</dbReference>
<dbReference type="GO" id="GO:0045040">
    <property type="term" value="P:protein insertion into mitochondrial outer membrane"/>
    <property type="evidence" value="ECO:0007669"/>
    <property type="project" value="UniProtKB-UniRule"/>
</dbReference>
<dbReference type="CDD" id="cd21672">
    <property type="entry name" value="SMP_Mdm12"/>
    <property type="match status" value="1"/>
</dbReference>
<dbReference type="HAMAP" id="MF_03104">
    <property type="entry name" value="Mdm12"/>
    <property type="match status" value="1"/>
</dbReference>
<dbReference type="InterPro" id="IPR027532">
    <property type="entry name" value="Mdm12"/>
</dbReference>
<dbReference type="InterPro" id="IPR031468">
    <property type="entry name" value="SMP_LBD"/>
</dbReference>
<dbReference type="PANTHER" id="PTHR28204">
    <property type="entry name" value="MITOCHONDRIAL DISTRIBUTION AND MORPHOLOGY PROTEIN 12"/>
    <property type="match status" value="1"/>
</dbReference>
<dbReference type="PANTHER" id="PTHR28204:SF1">
    <property type="entry name" value="MITOCHONDRIAL DISTRIBUTION AND MORPHOLOGY PROTEIN 12"/>
    <property type="match status" value="1"/>
</dbReference>
<dbReference type="PROSITE" id="PS51847">
    <property type="entry name" value="SMP"/>
    <property type="match status" value="1"/>
</dbReference>
<feature type="chain" id="PRO_0000384286" description="Mitochondrial distribution and morphology protein 12">
    <location>
        <begin position="1"/>
        <end position="415"/>
    </location>
</feature>
<feature type="domain" description="SMP-LTD" evidence="1">
    <location>
        <begin position="1"/>
        <end position="402"/>
    </location>
</feature>
<feature type="region of interest" description="Disordered" evidence="2">
    <location>
        <begin position="53"/>
        <end position="146"/>
    </location>
</feature>
<feature type="compositionally biased region" description="Acidic residues" evidence="2">
    <location>
        <begin position="62"/>
        <end position="75"/>
    </location>
</feature>
<feature type="compositionally biased region" description="Acidic residues" evidence="2">
    <location>
        <begin position="92"/>
        <end position="103"/>
    </location>
</feature>
<sequence length="415" mass="46961">MSFDINWSELVSDESLNESIKEFLDNQFQSISLPSFIDNLSVSDFSLGNSPPEITIRHIGDPFDDFYEDEGDDDEKERKNVYMQQGVSEDTNSSDDDEDDEYDGDRSNDLSIITEDPNIHTFTSEADRSRLASPPRPPLTDLRRSRASSDPFSLIMGNNNLNYMHNYNMNYVGLGNLNATGTHTGTDTPTNILNQNPYATLKSNPSSYYKNKDPSKFSGSDTHKNGFRLTSKEPCSTRGENDIQLIAEVKYNGDLHLELTVNLLVNYPSPNFISLPIKLHVTDLVIHSIITIAYLKNSVFFSFLCDVNDINSDYFTSSTQNSTPEHMGATNTGGNFVDYVSGPINRERIDIIKKVKIESEIGEAEQNALRNVGKVERFLVEQLRNIIRDEFAWPSWVCFDLNEDDDDESDDQEEN</sequence>
<proteinExistence type="inferred from homology"/>
<gene>
    <name evidence="1" type="primary">MDM12</name>
    <name type="ordered locus">DEHA2F22022g</name>
</gene>
<protein>
    <recommendedName>
        <fullName evidence="1">Mitochondrial distribution and morphology protein 12</fullName>
    </recommendedName>
    <alternativeName>
        <fullName evidence="1">Mitochondrial inheritance component MDM12</fullName>
    </alternativeName>
</protein>
<keyword id="KW-0256">Endoplasmic reticulum</keyword>
<keyword id="KW-0445">Lipid transport</keyword>
<keyword id="KW-0446">Lipid-binding</keyword>
<keyword id="KW-0472">Membrane</keyword>
<keyword id="KW-0496">Mitochondrion</keyword>
<keyword id="KW-1000">Mitochondrion outer membrane</keyword>
<keyword id="KW-1185">Reference proteome</keyword>
<keyword id="KW-0813">Transport</keyword>
<organism>
    <name type="scientific">Debaryomyces hansenii (strain ATCC 36239 / CBS 767 / BCRC 21394 / JCM 1990 / NBRC 0083 / IGC 2968)</name>
    <name type="common">Yeast</name>
    <name type="synonym">Torulaspora hansenii</name>
    <dbReference type="NCBI Taxonomy" id="284592"/>
    <lineage>
        <taxon>Eukaryota</taxon>
        <taxon>Fungi</taxon>
        <taxon>Dikarya</taxon>
        <taxon>Ascomycota</taxon>
        <taxon>Saccharomycotina</taxon>
        <taxon>Pichiomycetes</taxon>
        <taxon>Debaryomycetaceae</taxon>
        <taxon>Debaryomyces</taxon>
    </lineage>
</organism>
<accession>B5RUL6</accession>
<name>MDM12_DEBHA</name>
<reference key="1">
    <citation type="journal article" date="2004" name="Nature">
        <title>Genome evolution in yeasts.</title>
        <authorList>
            <person name="Dujon B."/>
            <person name="Sherman D."/>
            <person name="Fischer G."/>
            <person name="Durrens P."/>
            <person name="Casaregola S."/>
            <person name="Lafontaine I."/>
            <person name="de Montigny J."/>
            <person name="Marck C."/>
            <person name="Neuveglise C."/>
            <person name="Talla E."/>
            <person name="Goffard N."/>
            <person name="Frangeul L."/>
            <person name="Aigle M."/>
            <person name="Anthouard V."/>
            <person name="Babour A."/>
            <person name="Barbe V."/>
            <person name="Barnay S."/>
            <person name="Blanchin S."/>
            <person name="Beckerich J.-M."/>
            <person name="Beyne E."/>
            <person name="Bleykasten C."/>
            <person name="Boisrame A."/>
            <person name="Boyer J."/>
            <person name="Cattolico L."/>
            <person name="Confanioleri F."/>
            <person name="de Daruvar A."/>
            <person name="Despons L."/>
            <person name="Fabre E."/>
            <person name="Fairhead C."/>
            <person name="Ferry-Dumazet H."/>
            <person name="Groppi A."/>
            <person name="Hantraye F."/>
            <person name="Hennequin C."/>
            <person name="Jauniaux N."/>
            <person name="Joyet P."/>
            <person name="Kachouri R."/>
            <person name="Kerrest A."/>
            <person name="Koszul R."/>
            <person name="Lemaire M."/>
            <person name="Lesur I."/>
            <person name="Ma L."/>
            <person name="Muller H."/>
            <person name="Nicaud J.-M."/>
            <person name="Nikolski M."/>
            <person name="Oztas S."/>
            <person name="Ozier-Kalogeropoulos O."/>
            <person name="Pellenz S."/>
            <person name="Potier S."/>
            <person name="Richard G.-F."/>
            <person name="Straub M.-L."/>
            <person name="Suleau A."/>
            <person name="Swennen D."/>
            <person name="Tekaia F."/>
            <person name="Wesolowski-Louvel M."/>
            <person name="Westhof E."/>
            <person name="Wirth B."/>
            <person name="Zeniou-Meyer M."/>
            <person name="Zivanovic Y."/>
            <person name="Bolotin-Fukuhara M."/>
            <person name="Thierry A."/>
            <person name="Bouchier C."/>
            <person name="Caudron B."/>
            <person name="Scarpelli C."/>
            <person name="Gaillardin C."/>
            <person name="Weissenbach J."/>
            <person name="Wincker P."/>
            <person name="Souciet J.-L."/>
        </authorList>
    </citation>
    <scope>NUCLEOTIDE SEQUENCE [LARGE SCALE GENOMIC DNA]</scope>
    <source>
        <strain>ATCC 36239 / CBS 767 / BCRC 21394 / JCM 1990 / NBRC 0083 / IGC 2968</strain>
    </source>
</reference>
<comment type="function">
    <text evidence="1">Component of the ERMES/MDM complex, which serves as a molecular tether to connect the endoplasmic reticulum (ER) and mitochondria. Components of this complex are involved in the control of mitochondrial shape and protein biogenesis, and function in nonvesicular lipid trafficking between the ER and mitochondria. MDM12 is required for the interaction of the ER-resident membrane protein MMM1 and the outer mitochondrial membrane-resident beta-barrel protein MDM10. The MDM12-MMM1 subcomplex functions in the major beta-barrel assembly pathway that is responsible for biogenesis of all mitochondrial outer membrane beta-barrel proteins, and acts in a late step after the SAM complex. The MDM10-MDM12-MMM1 subcomplex further acts in the TOM40-specific pathway after the action of the MDM12-MMM1 complex. Essential for establishing and maintaining the structure of mitochondria and maintenance of mtDNA nucleoids.</text>
</comment>
<comment type="subunit">
    <text evidence="1">Component of the ER-mitochondria encounter structure (ERMES) or MDM complex, composed of MMM1, MDM10, MDM12 and MDM34. A MMM1 homodimer associates with one molecule of MDM12 on each side in a pairwise head-to-tail manner, and the SMP-LTD domains of MMM1 and MDM12 generate a continuous hydrophobic tunnel for phospholipid trafficking.</text>
</comment>
<comment type="subcellular location">
    <subcellularLocation>
        <location evidence="1">Mitochondrion outer membrane</location>
        <topology evidence="1">Peripheral membrane protein</topology>
        <orientation evidence="1">Cytoplasmic side</orientation>
    </subcellularLocation>
    <subcellularLocation>
        <location evidence="1">Endoplasmic reticulum membrane</location>
        <topology evidence="1">Peripheral membrane protein</topology>
        <orientation evidence="1">Cytoplasmic side</orientation>
    </subcellularLocation>
    <text evidence="1">The ERMES/MDM complex localizes to a few discrete foci (around 10 per single cell), that represent mitochondria-endoplasmic reticulum junctions. These foci are often found next to mtDNA nucleoids.</text>
</comment>
<comment type="domain">
    <text evidence="1">The SMP-LTD domain is a barrel-like domain that can bind various types of glycerophospholipids in its interior and mediate their transfer between two adjacent bilayers.</text>
</comment>
<comment type="similarity">
    <text evidence="1">Belongs to the MDM12 family.</text>
</comment>
<comment type="sequence caution" evidence="3">
    <conflict type="erroneous initiation">
        <sequence resource="EMBL-CDS" id="CAR66394"/>
    </conflict>
</comment>